<reference key="1">
    <citation type="journal article" date="2018" name="Nat. Commun.">
        <title>Strobilurin biosynthesis in Basidiomycete fungi.</title>
        <authorList>
            <person name="Nofiani R."/>
            <person name="de Mattos-Shipley K."/>
            <person name="Lebe K.E."/>
            <person name="Han L.C."/>
            <person name="Iqbal Z."/>
            <person name="Bailey A.M."/>
            <person name="Willis C.L."/>
            <person name="Simpson T.J."/>
            <person name="Cox R.J."/>
        </authorList>
    </citation>
    <scope>NUCLEOTIDE SEQUENCE [GENOMIC DNA]</scope>
    <scope>INDUCTION</scope>
    <scope>FUNCTION</scope>
    <scope>PATHWAY</scope>
    <scope>BIOTECHNOLOGY</scope>
    <source>
        <strain>CBS 621.79</strain>
    </source>
</reference>
<reference key="2">
    <citation type="journal article" date="1977" name="J. Antibiot.">
        <title>The strobilurins--new antifungal antibiotics from the basidiomycete Strobilurus tenacellus.</title>
        <authorList>
            <person name="Anke T."/>
            <person name="Oberwinkler F."/>
            <person name="Steglich W."/>
            <person name="Schramm G."/>
        </authorList>
    </citation>
    <scope>BIOTECHNOLOGY</scope>
</reference>
<reference key="3">
    <citation type="journal article" date="1981" name="FEBS Lett.">
        <title>Oudemansin, strobilurin A, strobilurin B and myxothiazol: new inhibitors of the bc1 segment of the respiratory chain with an E-beta-methoxyacrylate system as common structural element.</title>
        <authorList>
            <person name="Becker W.F."/>
            <person name="von Jagow G."/>
            <person name="Anke T."/>
            <person name="Steglich W."/>
        </authorList>
    </citation>
    <scope>BIOTECHNOLOGY</scope>
</reference>
<reference key="4">
    <citation type="journal article" date="1999" name="Angew. Chem. Int. Ed.">
        <title>Strobilurins: evolution of a new class of active substances.</title>
        <authorList>
            <person name="Sauter H."/>
            <person name="Steglich W."/>
            <person name="Anke T."/>
        </authorList>
    </citation>
    <scope>REVIEW ON BIOTECHNOLOGY</scope>
</reference>
<reference key="5">
    <citation type="journal article" date="2002" name="Pest Manag. Sci.">
        <title>The strobilurin fungicides.</title>
        <authorList>
            <person name="Bartlett D.W."/>
            <person name="Clough J.M."/>
            <person name="Godwin J.R."/>
            <person name="Hall A.A."/>
            <person name="Hamer M."/>
            <person name="Parr-Dobrzanski B."/>
        </authorList>
    </citation>
    <scope>REVIEW ON BIOTECHNOLOGY</scope>
</reference>
<evidence type="ECO:0000269" key="1">
    <source>
    </source>
</evidence>
<evidence type="ECO:0000269" key="2">
    <source>
    </source>
</evidence>
<evidence type="ECO:0000269" key="3">
    <source>
    </source>
</evidence>
<evidence type="ECO:0000303" key="4">
    <source>
    </source>
</evidence>
<evidence type="ECO:0000303" key="5">
    <source>
    </source>
</evidence>
<evidence type="ECO:0000303" key="6">
    <source>
    </source>
</evidence>
<evidence type="ECO:0000305" key="7"/>
<evidence type="ECO:0000305" key="8">
    <source>
    </source>
</evidence>
<organism>
    <name type="scientific">Strobilurus tenacellus</name>
    <dbReference type="NCBI Taxonomy" id="41251"/>
    <lineage>
        <taxon>Eukaryota</taxon>
        <taxon>Fungi</taxon>
        <taxon>Dikarya</taxon>
        <taxon>Basidiomycota</taxon>
        <taxon>Agaricomycotina</taxon>
        <taxon>Agaricomycetes</taxon>
        <taxon>Agaricomycetidae</taxon>
        <taxon>Agaricales</taxon>
        <taxon>Marasmiineae</taxon>
        <taxon>Physalacriaceae</taxon>
        <taxon>Strobilurus</taxon>
    </lineage>
</organism>
<feature type="chain" id="PRO_0000449339" description="Methyltransferase str2">
    <location>
        <begin position="1"/>
        <end position="275"/>
    </location>
</feature>
<name>STR2_STRTC</name>
<sequence>MAAESAKQTPYVLVADEVEWARLDAMHNGIAKFLGNELTPVDLGQPKKILEIGAGSGAWAIQAAKLYPDADVLAIDMNPIPARPLPPNVRYQNINVLEPFPFEAASFDVIHIRLVLCHLPDGHSVLKRIIDLVAPGGWLLIDDIDWAEAFEGLDKAPGIKRGLTALVRSMEAEAGDPHYGKTLKPYLEASKELSEVHVREVELPVNPIPEDPALAGLSQMMRKALVGALGAAKQSSATVGLTKEVQEGFLSEMAREDMDWSYSCYLYFAAVKKSA</sequence>
<keyword id="KW-0489">Methyltransferase</keyword>
<keyword id="KW-0808">Transferase</keyword>
<accession>A0A384XC21</accession>
<comment type="function">
    <text evidence="1 8">Methyltransferase; part of the gene cluster that mediates the biosynthesis of strobilurin A, an antifungal polyketide that contains a key beta-methoxyacrylate toxophore that targets the complex III of the mitochondrial electron transport chain (PubMed:30258052). Strobilurin biosynthesis begins with construction of benzoyl CoA by step-wise elimination of ammonia from phenylalanine by the phenylalanine ammonia-lyase str11, oxygenation by str8 and retro-Claisen reaction to form benzoic acid, which is activated to its CoA thiolester benzoyl CoA by the dedicated CoA ligase str10 (PubMed:30258052). Benzoyl CoA forms the starter unit for the highly reducing polyketide synthase stpks1 that produces the polyketide prestrobilutin A (PubMed:30258052). The FAD-dependent oxygenase str9 then catalyzes the key oxidative rearrangement responsible for the creation of the beta-methoxyacrylate toxophore (PubMed:30258052). Str9 performs epoxidation of the 2,3 olefin of prestrobilutin A, followed by Meinwald rearrangement to furnish the aldehyde intermediate (Probable). Rapid enolization of the aldehyde intermediate would give the beta-methoxyacrylate skeleton and methylations catalyzed by str2 and str3 complete the synthesis and lead to the production of strobilurin A (Probable). The short-chain dehydrogenase stl2 and the dehydrogenase str4 play a role in the shunt pathway leading to the production of bolineol (PubMed:30258052). The cluster encodes no obvious halogenase gene that could be involved in production of strobilurin B, nor any obvious dimethylallyl-transferase that could be involved in the production of strobilurin G (Probable). It is possible that unknown proteins encoded in, or near, the cluster (such as str1 or stl1) may form new classes of halogenases or dimethylally-transferases, or that the responsible genes are located elsewhere on the genome (Probable). Similarly, proteins encoded by str5/str6 hydrolases appear to have no chemical role in the biosynthesis of strobilurin A (Probable). Finally, no obvious self-resistance gene is found within the cluster (Probable).</text>
</comment>
<comment type="pathway">
    <text evidence="8">Mycotoxin biosynthesis.</text>
</comment>
<comment type="induction">
    <text evidence="1">Induced in strobilurin-producing conditions (on CGC medium after 6 days of growth).</text>
</comment>
<comment type="biotechnology">
    <text evidence="2 3 4 5 6">The structure of strobilurin A was used for the development of the major class of beta-methoxyacrylate agricultural fungicides since its beta-methoxyacrylate toxophore targets the Qo site of complex III of the mitochondrial electron transport chain and prevents adenosine triphosphate synthesis (PubMed:563391, PubMed:6271595). Compounds such as azoxystrobin (Syngenta) and Kresoxim methyl (BASF) are among the most widely used fungicides worldwide (PubMed:12146165, PubMed:29711574). This class of antifungals are used as effective treatments against a broad range of destructive fungal plant pathogens and make significant contributions to food security (PubMed:12146165, PubMed:29711574). The strobilurin fungicides are estimated to have been worth 3.4 billion dollars in 2015 and they make up 25% of the fungicide market and 6.7% of the total crop protection market (PubMed:30258052).</text>
</comment>
<comment type="similarity">
    <text evidence="7">Belongs to the methyltransferase superfamily. LaeA methyltransferase family.</text>
</comment>
<dbReference type="EC" id="2.1.1.-" evidence="8"/>
<dbReference type="EMBL" id="KY070339">
    <property type="protein sequence ID" value="ATV82112.1"/>
    <property type="molecule type" value="Genomic_DNA"/>
</dbReference>
<dbReference type="SMR" id="A0A384XC21"/>
<dbReference type="GO" id="GO:0008168">
    <property type="term" value="F:methyltransferase activity"/>
    <property type="evidence" value="ECO:0007669"/>
    <property type="project" value="UniProtKB-KW"/>
</dbReference>
<dbReference type="GO" id="GO:0032259">
    <property type="term" value="P:methylation"/>
    <property type="evidence" value="ECO:0007669"/>
    <property type="project" value="UniProtKB-KW"/>
</dbReference>
<dbReference type="CDD" id="cd02440">
    <property type="entry name" value="AdoMet_MTases"/>
    <property type="match status" value="1"/>
</dbReference>
<dbReference type="Gene3D" id="3.40.50.150">
    <property type="entry name" value="Vaccinia Virus protein VP39"/>
    <property type="match status" value="1"/>
</dbReference>
<dbReference type="InterPro" id="IPR029063">
    <property type="entry name" value="SAM-dependent_MTases_sf"/>
</dbReference>
<dbReference type="PANTHER" id="PTHR43591">
    <property type="entry name" value="METHYLTRANSFERASE"/>
    <property type="match status" value="1"/>
</dbReference>
<dbReference type="Pfam" id="PF13489">
    <property type="entry name" value="Methyltransf_23"/>
    <property type="match status" value="1"/>
</dbReference>
<dbReference type="SUPFAM" id="SSF53335">
    <property type="entry name" value="S-adenosyl-L-methionine-dependent methyltransferases"/>
    <property type="match status" value="1"/>
</dbReference>
<protein>
    <recommendedName>
        <fullName evidence="6">Methyltransferase str2</fullName>
        <ecNumber evidence="8">2.1.1.-</ecNumber>
    </recommendedName>
    <alternativeName>
        <fullName evidence="6">Strobilurin A biosynthesis cluster protein r2</fullName>
    </alternativeName>
</protein>
<gene>
    <name evidence="6" type="primary">str2</name>
</gene>
<proteinExistence type="evidence at protein level"/>